<organism>
    <name type="scientific">Dictyostelium discoideum</name>
    <name type="common">Social amoeba</name>
    <dbReference type="NCBI Taxonomy" id="44689"/>
    <lineage>
        <taxon>Eukaryota</taxon>
        <taxon>Amoebozoa</taxon>
        <taxon>Evosea</taxon>
        <taxon>Eumycetozoa</taxon>
        <taxon>Dictyostelia</taxon>
        <taxon>Dictyosteliales</taxon>
        <taxon>Dictyosteliaceae</taxon>
        <taxon>Dictyostelium</taxon>
    </lineage>
</organism>
<evidence type="ECO:0000255" key="1"/>
<evidence type="ECO:0000305" key="2"/>
<dbReference type="EMBL" id="AAFI02000187">
    <property type="protein sequence ID" value="EAL61407.1"/>
    <property type="molecule type" value="Genomic_DNA"/>
</dbReference>
<dbReference type="RefSeq" id="XP_629830.1">
    <property type="nucleotide sequence ID" value="XM_629828.1"/>
</dbReference>
<dbReference type="SMR" id="Q54DP2"/>
<dbReference type="STRING" id="44689.Q54DP2"/>
<dbReference type="GlyCosmos" id="Q54DP2">
    <property type="glycosylation" value="2 sites, No reported glycans"/>
</dbReference>
<dbReference type="GlyGen" id="Q54DP2">
    <property type="glycosylation" value="2 sites"/>
</dbReference>
<dbReference type="PaxDb" id="44689-DDB0232061"/>
<dbReference type="EnsemblProtists" id="EAL61407">
    <property type="protein sequence ID" value="EAL61407"/>
    <property type="gene ID" value="DDB_G0292102"/>
</dbReference>
<dbReference type="GeneID" id="8628511"/>
<dbReference type="KEGG" id="ddi:DDB_G0292102"/>
<dbReference type="dictyBase" id="DDB_G0292102">
    <property type="gene designation" value="fscJ"/>
</dbReference>
<dbReference type="VEuPathDB" id="AmoebaDB:DDB_G0292102"/>
<dbReference type="eggNOG" id="ENOG502RC52">
    <property type="taxonomic scope" value="Eukaryota"/>
</dbReference>
<dbReference type="HOGENOM" id="CLU_036764_0_0_1"/>
<dbReference type="InParanoid" id="Q54DP2"/>
<dbReference type="OMA" id="IWILNIV"/>
<dbReference type="PhylomeDB" id="Q54DP2"/>
<dbReference type="PRO" id="PR:Q54DP2"/>
<dbReference type="Proteomes" id="UP000002195">
    <property type="component" value="Chromosome 6"/>
</dbReference>
<dbReference type="GO" id="GO:0016020">
    <property type="term" value="C:membrane"/>
    <property type="evidence" value="ECO:0007669"/>
    <property type="project" value="UniProtKB-SubCell"/>
</dbReference>
<dbReference type="Gene3D" id="1.20.1070.10">
    <property type="entry name" value="Rhodopsin 7-helix transmembrane proteins"/>
    <property type="match status" value="1"/>
</dbReference>
<dbReference type="InterPro" id="IPR050949">
    <property type="entry name" value="GPCR_Fz/Smo-like"/>
</dbReference>
<dbReference type="PANTHER" id="PTHR31787:SF11">
    <property type="entry name" value="FRIZZLED_SMOOTHENED-LIKE SANS CRD PROTEIN J"/>
    <property type="match status" value="1"/>
</dbReference>
<dbReference type="PANTHER" id="PTHR31787">
    <property type="entry name" value="G-PROTEIN-COUPLED RECEPTOR GPCR FAMILY PROTEIN"/>
    <property type="match status" value="1"/>
</dbReference>
<reference key="1">
    <citation type="journal article" date="2005" name="Nature">
        <title>The genome of the social amoeba Dictyostelium discoideum.</title>
        <authorList>
            <person name="Eichinger L."/>
            <person name="Pachebat J.A."/>
            <person name="Gloeckner G."/>
            <person name="Rajandream M.A."/>
            <person name="Sucgang R."/>
            <person name="Berriman M."/>
            <person name="Song J."/>
            <person name="Olsen R."/>
            <person name="Szafranski K."/>
            <person name="Xu Q."/>
            <person name="Tunggal B."/>
            <person name="Kummerfeld S."/>
            <person name="Madera M."/>
            <person name="Konfortov B.A."/>
            <person name="Rivero F."/>
            <person name="Bankier A.T."/>
            <person name="Lehmann R."/>
            <person name="Hamlin N."/>
            <person name="Davies R."/>
            <person name="Gaudet P."/>
            <person name="Fey P."/>
            <person name="Pilcher K."/>
            <person name="Chen G."/>
            <person name="Saunders D."/>
            <person name="Sodergren E.J."/>
            <person name="Davis P."/>
            <person name="Kerhornou A."/>
            <person name="Nie X."/>
            <person name="Hall N."/>
            <person name="Anjard C."/>
            <person name="Hemphill L."/>
            <person name="Bason N."/>
            <person name="Farbrother P."/>
            <person name="Desany B."/>
            <person name="Just E."/>
            <person name="Morio T."/>
            <person name="Rost R."/>
            <person name="Churcher C.M."/>
            <person name="Cooper J."/>
            <person name="Haydock S."/>
            <person name="van Driessche N."/>
            <person name="Cronin A."/>
            <person name="Goodhead I."/>
            <person name="Muzny D.M."/>
            <person name="Mourier T."/>
            <person name="Pain A."/>
            <person name="Lu M."/>
            <person name="Harper D."/>
            <person name="Lindsay R."/>
            <person name="Hauser H."/>
            <person name="James K.D."/>
            <person name="Quiles M."/>
            <person name="Madan Babu M."/>
            <person name="Saito T."/>
            <person name="Buchrieser C."/>
            <person name="Wardroper A."/>
            <person name="Felder M."/>
            <person name="Thangavelu M."/>
            <person name="Johnson D."/>
            <person name="Knights A."/>
            <person name="Loulseged H."/>
            <person name="Mungall K.L."/>
            <person name="Oliver K."/>
            <person name="Price C."/>
            <person name="Quail M.A."/>
            <person name="Urushihara H."/>
            <person name="Hernandez J."/>
            <person name="Rabbinowitsch E."/>
            <person name="Steffen D."/>
            <person name="Sanders M."/>
            <person name="Ma J."/>
            <person name="Kohara Y."/>
            <person name="Sharp S."/>
            <person name="Simmonds M.N."/>
            <person name="Spiegler S."/>
            <person name="Tivey A."/>
            <person name="Sugano S."/>
            <person name="White B."/>
            <person name="Walker D."/>
            <person name="Woodward J.R."/>
            <person name="Winckler T."/>
            <person name="Tanaka Y."/>
            <person name="Shaulsky G."/>
            <person name="Schleicher M."/>
            <person name="Weinstock G.M."/>
            <person name="Rosenthal A."/>
            <person name="Cox E.C."/>
            <person name="Chisholm R.L."/>
            <person name="Gibbs R.A."/>
            <person name="Loomis W.F."/>
            <person name="Platzer M."/>
            <person name="Kay R.R."/>
            <person name="Williams J.G."/>
            <person name="Dear P.H."/>
            <person name="Noegel A.A."/>
            <person name="Barrell B.G."/>
            <person name="Kuspa A."/>
        </authorList>
    </citation>
    <scope>NUCLEOTIDE SEQUENCE [LARGE SCALE GENOMIC DNA]</scope>
    <source>
        <strain>AX4</strain>
    </source>
</reference>
<reference key="2">
    <citation type="journal article" date="2006" name="Eur. J. Cell Biol.">
        <title>The Dictyostelium repertoire of seven transmembrane domain receptors.</title>
        <authorList>
            <person name="Prabhu Y."/>
            <person name="Eichinger L."/>
        </authorList>
    </citation>
    <scope>NOMENCLATURE</scope>
</reference>
<keyword id="KW-0175">Coiled coil</keyword>
<keyword id="KW-0325">Glycoprotein</keyword>
<keyword id="KW-0472">Membrane</keyword>
<keyword id="KW-0675">Receptor</keyword>
<keyword id="KW-1185">Reference proteome</keyword>
<keyword id="KW-0732">Signal</keyword>
<keyword id="KW-0812">Transmembrane</keyword>
<keyword id="KW-1133">Transmembrane helix</keyword>
<protein>
    <recommendedName>
        <fullName>Frizzled/smoothened-like sans CRD protein J</fullName>
    </recommendedName>
</protein>
<sequence>MKFLFSVILVIISFLGISKIVNGQIACPSPFLYRATNDTVGDYDLGYQYINIGKPLPPQLSFLNNCLMPCQSSFFEQDSWNSFNKLVKQMGAVAFTCSAIIMIIYGPLMNRSFFKFDRHTITVFCFALSTFFIGVSDLMFATNDVDMVCPESHRYARQTDKTCATNGVLFQFGWLGSVMWFAFLSIDGFFRASGKKMNKIAFAIVLASIWILNIVLSFAPMGGDQYGAYFVGQVNCWILVKNWQYAFFWAELIVSLAIGFVGICLTIYSLIRKTSDGNTLKHVTPLILVFLLFCQYLYMIIFYGIINEKKDHYQNILAEQVGCIFNNALAKMKVPGIVYAGECTFNETITFSSQYAFLFFVRLLGIEIFAFYLFSKETLLLIKSSYIATMFGLGDKDAYDVELEETD</sequence>
<proteinExistence type="inferred from homology"/>
<name>FSCJ_DICDI</name>
<accession>Q54DP2</accession>
<gene>
    <name type="primary">fscJ</name>
    <name type="ORF">DDB_G0292102</name>
</gene>
<comment type="subcellular location">
    <subcellularLocation>
        <location evidence="2">Membrane</location>
        <topology evidence="2">Multi-pass membrane protein</topology>
    </subcellularLocation>
</comment>
<comment type="similarity">
    <text evidence="2">Belongs to the G-protein coupled receptor Fz/Smo family.</text>
</comment>
<feature type="signal peptide" evidence="1">
    <location>
        <begin position="1"/>
        <end position="23"/>
    </location>
</feature>
<feature type="chain" id="PRO_0000371362" description="Frizzled/smoothened-like sans CRD protein J">
    <location>
        <begin position="24"/>
        <end position="407"/>
    </location>
</feature>
<feature type="topological domain" description="Extracellular" evidence="1">
    <location>
        <begin position="24"/>
        <end position="89"/>
    </location>
</feature>
<feature type="transmembrane region" description="Helical; Name=1" evidence="1">
    <location>
        <begin position="90"/>
        <end position="110"/>
    </location>
</feature>
<feature type="topological domain" description="Cytoplasmic" evidence="1">
    <location>
        <begin position="111"/>
        <end position="120"/>
    </location>
</feature>
<feature type="transmembrane region" description="Helical; Name=2" evidence="1">
    <location>
        <begin position="121"/>
        <end position="141"/>
    </location>
</feature>
<feature type="topological domain" description="Extracellular" evidence="1">
    <location>
        <begin position="142"/>
        <end position="169"/>
    </location>
</feature>
<feature type="transmembrane region" description="Helical; Name=3" evidence="1">
    <location>
        <begin position="170"/>
        <end position="190"/>
    </location>
</feature>
<feature type="topological domain" description="Cytoplasmic" evidence="1">
    <location>
        <begin position="191"/>
        <end position="199"/>
    </location>
</feature>
<feature type="transmembrane region" description="Helical; Name=4" evidence="1">
    <location>
        <begin position="200"/>
        <end position="220"/>
    </location>
</feature>
<feature type="topological domain" description="Extracellular" evidence="1">
    <location>
        <begin position="221"/>
        <end position="246"/>
    </location>
</feature>
<feature type="transmembrane region" description="Helical; Name=5" evidence="1">
    <location>
        <begin position="247"/>
        <end position="267"/>
    </location>
</feature>
<feature type="topological domain" description="Cytoplasmic" evidence="1">
    <location>
        <begin position="268"/>
        <end position="285"/>
    </location>
</feature>
<feature type="transmembrane region" description="Helical; Name=6" evidence="1">
    <location>
        <begin position="286"/>
        <end position="306"/>
    </location>
</feature>
<feature type="topological domain" description="Extracellular" evidence="1">
    <location>
        <begin position="307"/>
        <end position="354"/>
    </location>
</feature>
<feature type="transmembrane region" description="Helical; Name=7" evidence="1">
    <location>
        <begin position="355"/>
        <end position="375"/>
    </location>
</feature>
<feature type="topological domain" description="Cytoplasmic" evidence="1">
    <location>
        <begin position="376"/>
        <end position="407"/>
    </location>
</feature>
<feature type="glycosylation site" description="N-linked (GlcNAc...) asparagine" evidence="1">
    <location>
        <position position="37"/>
    </location>
</feature>
<feature type="glycosylation site" description="N-linked (GlcNAc...) asparagine" evidence="1">
    <location>
        <position position="346"/>
    </location>
</feature>